<proteinExistence type="inferred from homology"/>
<protein>
    <recommendedName>
        <fullName evidence="1">Malate dehydrogenase</fullName>
        <ecNumber evidence="1">1.1.1.37</ecNumber>
    </recommendedName>
</protein>
<reference key="1">
    <citation type="submission" date="2008-10" db="EMBL/GenBank/DDBJ databases">
        <title>Genome sequence of Bacillus cereus G9842.</title>
        <authorList>
            <person name="Dodson R.J."/>
            <person name="Durkin A.S."/>
            <person name="Rosovitz M.J."/>
            <person name="Rasko D.A."/>
            <person name="Hoffmaster A."/>
            <person name="Ravel J."/>
            <person name="Sutton G."/>
        </authorList>
    </citation>
    <scope>NUCLEOTIDE SEQUENCE [LARGE SCALE GENOMIC DNA]</scope>
    <source>
        <strain>G9842</strain>
    </source>
</reference>
<organism>
    <name type="scientific">Bacillus cereus (strain G9842)</name>
    <dbReference type="NCBI Taxonomy" id="405531"/>
    <lineage>
        <taxon>Bacteria</taxon>
        <taxon>Bacillati</taxon>
        <taxon>Bacillota</taxon>
        <taxon>Bacilli</taxon>
        <taxon>Bacillales</taxon>
        <taxon>Bacillaceae</taxon>
        <taxon>Bacillus</taxon>
        <taxon>Bacillus cereus group</taxon>
    </lineage>
</organism>
<dbReference type="EC" id="1.1.1.37" evidence="1"/>
<dbReference type="EMBL" id="CP001186">
    <property type="protein sequence ID" value="ACK96502.1"/>
    <property type="molecule type" value="Genomic_DNA"/>
</dbReference>
<dbReference type="RefSeq" id="WP_000153232.1">
    <property type="nucleotide sequence ID" value="NC_011772.1"/>
</dbReference>
<dbReference type="SMR" id="B7IJZ0"/>
<dbReference type="GeneID" id="93006518"/>
<dbReference type="KEGG" id="bcg:BCG9842_B0536"/>
<dbReference type="HOGENOM" id="CLU_045401_2_1_9"/>
<dbReference type="Proteomes" id="UP000006744">
    <property type="component" value="Chromosome"/>
</dbReference>
<dbReference type="GO" id="GO:0004459">
    <property type="term" value="F:L-lactate dehydrogenase activity"/>
    <property type="evidence" value="ECO:0007669"/>
    <property type="project" value="TreeGrafter"/>
</dbReference>
<dbReference type="GO" id="GO:0030060">
    <property type="term" value="F:L-malate dehydrogenase (NAD+) activity"/>
    <property type="evidence" value="ECO:0007669"/>
    <property type="project" value="UniProtKB-UniRule"/>
</dbReference>
<dbReference type="GO" id="GO:0006089">
    <property type="term" value="P:lactate metabolic process"/>
    <property type="evidence" value="ECO:0007669"/>
    <property type="project" value="TreeGrafter"/>
</dbReference>
<dbReference type="GO" id="GO:0006099">
    <property type="term" value="P:tricarboxylic acid cycle"/>
    <property type="evidence" value="ECO:0007669"/>
    <property type="project" value="UniProtKB-UniRule"/>
</dbReference>
<dbReference type="CDD" id="cd01339">
    <property type="entry name" value="LDH-like_MDH"/>
    <property type="match status" value="1"/>
</dbReference>
<dbReference type="FunFam" id="3.40.50.720:FF:000018">
    <property type="entry name" value="Malate dehydrogenase"/>
    <property type="match status" value="1"/>
</dbReference>
<dbReference type="FunFam" id="3.90.110.10:FF:000004">
    <property type="entry name" value="Malate dehydrogenase"/>
    <property type="match status" value="1"/>
</dbReference>
<dbReference type="Gene3D" id="3.90.110.10">
    <property type="entry name" value="Lactate dehydrogenase/glycoside hydrolase, family 4, C-terminal"/>
    <property type="match status" value="1"/>
</dbReference>
<dbReference type="Gene3D" id="3.40.50.720">
    <property type="entry name" value="NAD(P)-binding Rossmann-like Domain"/>
    <property type="match status" value="1"/>
</dbReference>
<dbReference type="HAMAP" id="MF_00487">
    <property type="entry name" value="Malate_dehydrog_3"/>
    <property type="match status" value="1"/>
</dbReference>
<dbReference type="InterPro" id="IPR001557">
    <property type="entry name" value="L-lactate/malate_DH"/>
</dbReference>
<dbReference type="InterPro" id="IPR022383">
    <property type="entry name" value="Lactate/malate_DH_C"/>
</dbReference>
<dbReference type="InterPro" id="IPR001236">
    <property type="entry name" value="Lactate/malate_DH_N"/>
</dbReference>
<dbReference type="InterPro" id="IPR015955">
    <property type="entry name" value="Lactate_DH/Glyco_Ohase_4_C"/>
</dbReference>
<dbReference type="InterPro" id="IPR011275">
    <property type="entry name" value="Malate_DH_type3"/>
</dbReference>
<dbReference type="InterPro" id="IPR036291">
    <property type="entry name" value="NAD(P)-bd_dom_sf"/>
</dbReference>
<dbReference type="NCBIfam" id="TIGR01763">
    <property type="entry name" value="MalateDH_bact"/>
    <property type="match status" value="1"/>
</dbReference>
<dbReference type="NCBIfam" id="NF004863">
    <property type="entry name" value="PRK06223.1"/>
    <property type="match status" value="1"/>
</dbReference>
<dbReference type="PANTHER" id="PTHR43128">
    <property type="entry name" value="L-2-HYDROXYCARBOXYLATE DEHYDROGENASE (NAD(P)(+))"/>
    <property type="match status" value="1"/>
</dbReference>
<dbReference type="PANTHER" id="PTHR43128:SF16">
    <property type="entry name" value="L-LACTATE DEHYDROGENASE"/>
    <property type="match status" value="1"/>
</dbReference>
<dbReference type="Pfam" id="PF02866">
    <property type="entry name" value="Ldh_1_C"/>
    <property type="match status" value="1"/>
</dbReference>
<dbReference type="Pfam" id="PF00056">
    <property type="entry name" value="Ldh_1_N"/>
    <property type="match status" value="1"/>
</dbReference>
<dbReference type="PIRSF" id="PIRSF000102">
    <property type="entry name" value="Lac_mal_DH"/>
    <property type="match status" value="1"/>
</dbReference>
<dbReference type="PRINTS" id="PR00086">
    <property type="entry name" value="LLDHDRGNASE"/>
</dbReference>
<dbReference type="SUPFAM" id="SSF56327">
    <property type="entry name" value="LDH C-terminal domain-like"/>
    <property type="match status" value="1"/>
</dbReference>
<dbReference type="SUPFAM" id="SSF51735">
    <property type="entry name" value="NAD(P)-binding Rossmann-fold domains"/>
    <property type="match status" value="1"/>
</dbReference>
<evidence type="ECO:0000255" key="1">
    <source>
        <dbReference type="HAMAP-Rule" id="MF_00487"/>
    </source>
</evidence>
<gene>
    <name evidence="1" type="primary">mdh</name>
    <name type="ordered locus">BCG9842_B0536</name>
</gene>
<sequence>MTIKRKKVSVIGAGFTGATTAFLLAQKELADVVLVDIPQLENPTKGKALDMLEASPVQGFDANIIGTSDYADTADSDVVVITAGIARKPGMSRDDLVATNSKIMKSITRDIAKHSPNAIIVVLTNPVDAMTYSVFKEAGFPKERVIGQSGVLDTARFRTFIAQELNLSVKDITGFVLGGHGDDMVPLVRYSYAGGIPLETLIPKERLEAIVERTRKGGGEIVGLLGNGSAYYAPAASLVEMTEAILKDQRRVLPAIAYLEGEYGYSDLYLGVPVILGGNGIEKIIELELLADEKEALDRSVESVRNVMKVLV</sequence>
<keyword id="KW-0520">NAD</keyword>
<keyword id="KW-0560">Oxidoreductase</keyword>
<keyword id="KW-0597">Phosphoprotein</keyword>
<keyword id="KW-0816">Tricarboxylic acid cycle</keyword>
<feature type="chain" id="PRO_1000126122" description="Malate dehydrogenase">
    <location>
        <begin position="1"/>
        <end position="312"/>
    </location>
</feature>
<feature type="active site" description="Proton acceptor" evidence="1">
    <location>
        <position position="180"/>
    </location>
</feature>
<feature type="binding site" evidence="1">
    <location>
        <begin position="12"/>
        <end position="17"/>
    </location>
    <ligand>
        <name>NAD(+)</name>
        <dbReference type="ChEBI" id="CHEBI:57540"/>
    </ligand>
</feature>
<feature type="binding site" evidence="1">
    <location>
        <position position="36"/>
    </location>
    <ligand>
        <name>NAD(+)</name>
        <dbReference type="ChEBI" id="CHEBI:57540"/>
    </ligand>
</feature>
<feature type="binding site" evidence="1">
    <location>
        <position position="87"/>
    </location>
    <ligand>
        <name>substrate</name>
    </ligand>
</feature>
<feature type="binding site" evidence="1">
    <location>
        <position position="93"/>
    </location>
    <ligand>
        <name>substrate</name>
    </ligand>
</feature>
<feature type="binding site" evidence="1">
    <location>
        <position position="100"/>
    </location>
    <ligand>
        <name>NAD(+)</name>
        <dbReference type="ChEBI" id="CHEBI:57540"/>
    </ligand>
</feature>
<feature type="binding site" evidence="1">
    <location>
        <begin position="123"/>
        <end position="125"/>
    </location>
    <ligand>
        <name>NAD(+)</name>
        <dbReference type="ChEBI" id="CHEBI:57540"/>
    </ligand>
</feature>
<feature type="binding site" evidence="1">
    <location>
        <position position="125"/>
    </location>
    <ligand>
        <name>substrate</name>
    </ligand>
</feature>
<feature type="binding site" evidence="1">
    <location>
        <position position="156"/>
    </location>
    <ligand>
        <name>substrate</name>
    </ligand>
</feature>
<feature type="modified residue" description="Phosphoserine" evidence="1">
    <location>
        <position position="149"/>
    </location>
</feature>
<comment type="function">
    <text evidence="1">Catalyzes the reversible oxidation of malate to oxaloacetate.</text>
</comment>
<comment type="catalytic activity">
    <reaction evidence="1">
        <text>(S)-malate + NAD(+) = oxaloacetate + NADH + H(+)</text>
        <dbReference type="Rhea" id="RHEA:21432"/>
        <dbReference type="ChEBI" id="CHEBI:15378"/>
        <dbReference type="ChEBI" id="CHEBI:15589"/>
        <dbReference type="ChEBI" id="CHEBI:16452"/>
        <dbReference type="ChEBI" id="CHEBI:57540"/>
        <dbReference type="ChEBI" id="CHEBI:57945"/>
        <dbReference type="EC" id="1.1.1.37"/>
    </reaction>
</comment>
<comment type="similarity">
    <text evidence="1">Belongs to the LDH/MDH superfamily. MDH type 3 family.</text>
</comment>
<accession>B7IJZ0</accession>
<name>MDH_BACC2</name>